<accession>Q0VCQ1</accession>
<accession>Q9GKK1</accession>
<evidence type="ECO:0000250" key="1"/>
<evidence type="ECO:0000250" key="2">
    <source>
        <dbReference type="UniProtKB" id="P56545"/>
    </source>
</evidence>
<evidence type="ECO:0000256" key="3">
    <source>
        <dbReference type="SAM" id="MobiDB-lite"/>
    </source>
</evidence>
<evidence type="ECO:0000269" key="4">
    <source>
    </source>
</evidence>
<evidence type="ECO:0000303" key="5">
    <source>
    </source>
</evidence>
<evidence type="ECO:0000305" key="6"/>
<gene>
    <name type="primary">CTBP2</name>
</gene>
<name>CTBP2_BOVIN</name>
<comment type="function">
    <text evidence="1">Corepressor targeting diverse transcription regulators. Functions in brown adipose tissue (BAT) differentiation (By similarity). Isoform 2 probably acts as a scaffold for specialized synapses.</text>
</comment>
<comment type="subunit">
    <text evidence="1 2">Interacts with the C-terminus of adenovirus E1A protein. Can form homodimers or heterodimers of CTBP1 and CTBP2. Interacts with HIPK2. Interacts with ZNF217, PNN, NRIP1 and WIZ. Interacts with PRDM16; represses white adipose tissue (WAT)-specific genes expression (By similarity). Interacts with MCRIP1 (By similarity).</text>
</comment>
<comment type="subcellular location">
    <subcellularLocation>
        <location evidence="6">Nucleus</location>
    </subcellularLocation>
    <subcellularLocation>
        <location evidence="1">Synapse</location>
    </subcellularLocation>
</comment>
<comment type="alternative products">
    <event type="alternative splicing"/>
    <isoform>
        <id>Q0VCQ1-1</id>
        <name>1</name>
        <sequence type="displayed"/>
    </isoform>
    <isoform>
        <id>Q0VCQ1-2</id>
        <name>2</name>
        <name>Ribeye</name>
        <sequence type="described" ref="VSP_027614"/>
    </isoform>
</comment>
<comment type="tissue specificity">
    <text evidence="4">Isoform 2 is specifically localized in synaptic ribbon (at protein level).</text>
</comment>
<comment type="similarity">
    <text evidence="6">Belongs to the D-isomer specific 2-hydroxyacid dehydrogenase family.</text>
</comment>
<sequence>MALVDKHKVKRQRLDRICEGIRPQIMNGPLHPRPLVALLDGRDCTVEMPILKDLATVAFCDAQSTQEIHEKVLNEAVGAMMYHTITLTREDLEKFKALRVIVRIGSGYDNVDIKAAGELGIAVCNIPSAAVEETADSTICHILNLYRRNTWLYQALREGTRVQSVEQIREVASGAARIRGETLGLIGFGRTGQAVAVRAKAFGFSVLFYDPYLQDGTERSLGVQRVYTLQDLLYQSDCVSLHCNLNEHNHHLINDFTIKQMRQGAFLVNAARGGLVDEKALAQALKEGRIRGAALDVHESEPFSFAQGPLKDAPNLICTPHTAWYSEQASLEMREAAATEIRRAITGRIPESLRNCVNKEFFVTTAPWSVIDQQAIHPELNGATYRYPPGIVGVAPGGLPAAMEGIIPGGIPVTHNLPTVAHPSQAPSPNQPTKHGDNREHPNEQ</sequence>
<proteinExistence type="evidence at protein level"/>
<keyword id="KW-0025">Alternative splicing</keyword>
<keyword id="KW-0221">Differentiation</keyword>
<keyword id="KW-0903">Direct protein sequencing</keyword>
<keyword id="KW-0488">Methylation</keyword>
<keyword id="KW-0520">NAD</keyword>
<keyword id="KW-0539">Nucleus</keyword>
<keyword id="KW-0560">Oxidoreductase</keyword>
<keyword id="KW-0597">Phosphoprotein</keyword>
<keyword id="KW-1185">Reference proteome</keyword>
<keyword id="KW-0678">Repressor</keyword>
<keyword id="KW-0770">Synapse</keyword>
<keyword id="KW-0804">Transcription</keyword>
<keyword id="KW-0805">Transcription regulation</keyword>
<protein>
    <recommendedName>
        <fullName>C-terminal-binding protein 2</fullName>
        <shortName>CtBP2</shortName>
    </recommendedName>
</protein>
<dbReference type="EMBL" id="AF222713">
    <property type="protein sequence ID" value="AAG45953.1"/>
    <property type="molecule type" value="mRNA"/>
</dbReference>
<dbReference type="EMBL" id="BC120058">
    <property type="protein sequence ID" value="AAI20059.1"/>
    <property type="molecule type" value="mRNA"/>
</dbReference>
<dbReference type="RefSeq" id="NP_783643.1">
    <molecule id="Q0VCQ1-2"/>
    <property type="nucleotide sequence ID" value="NM_175712.1"/>
</dbReference>
<dbReference type="RefSeq" id="XP_005225890.1">
    <molecule id="Q0VCQ1-1"/>
    <property type="nucleotide sequence ID" value="XM_005225833.4"/>
</dbReference>
<dbReference type="RefSeq" id="XP_005225892.1">
    <property type="nucleotide sequence ID" value="XM_005225835.3"/>
</dbReference>
<dbReference type="RefSeq" id="XP_024841230.1">
    <molecule id="Q0VCQ1-1"/>
    <property type="nucleotide sequence ID" value="XM_024985462.2"/>
</dbReference>
<dbReference type="RefSeq" id="XP_059737706.1">
    <molecule id="Q0VCQ1-1"/>
    <property type="nucleotide sequence ID" value="XM_059881723.1"/>
</dbReference>
<dbReference type="SMR" id="Q0VCQ1"/>
<dbReference type="FunCoup" id="Q0VCQ1">
    <property type="interactions" value="1246"/>
</dbReference>
<dbReference type="STRING" id="9913.ENSBTAP00000004405"/>
<dbReference type="PaxDb" id="9913-ENSBTAP00000004405"/>
<dbReference type="Ensembl" id="ENSBTAT00000004404.7">
    <molecule id="Q0VCQ1-1"/>
    <property type="protein sequence ID" value="ENSBTAP00000004404.5"/>
    <property type="gene ID" value="ENSBTAG00000003397.7"/>
</dbReference>
<dbReference type="GeneID" id="281730"/>
<dbReference type="KEGG" id="bta:281730"/>
<dbReference type="CTD" id="1488"/>
<dbReference type="VEuPathDB" id="HostDB:ENSBTAG00000003397"/>
<dbReference type="eggNOG" id="KOG0067">
    <property type="taxonomic scope" value="Eukaryota"/>
</dbReference>
<dbReference type="GeneTree" id="ENSGT00940000154430"/>
<dbReference type="HOGENOM" id="CLU_019796_1_3_1"/>
<dbReference type="InParanoid" id="Q0VCQ1"/>
<dbReference type="OMA" id="NHHSQKP"/>
<dbReference type="OrthoDB" id="9991913at2759"/>
<dbReference type="Reactome" id="R-BTA-4641265">
    <property type="pathway name" value="Repression of WNT target genes"/>
</dbReference>
<dbReference type="Proteomes" id="UP000009136">
    <property type="component" value="Chromosome 26"/>
</dbReference>
<dbReference type="Bgee" id="ENSBTAG00000003397">
    <property type="expression patterns" value="Expressed in retina and 103 other cell types or tissues"/>
</dbReference>
<dbReference type="GO" id="GO:0005634">
    <property type="term" value="C:nucleus"/>
    <property type="evidence" value="ECO:0000250"/>
    <property type="project" value="UniProtKB"/>
</dbReference>
<dbReference type="GO" id="GO:0098684">
    <property type="term" value="C:photoreceptor ribbon synapse"/>
    <property type="evidence" value="ECO:0000314"/>
    <property type="project" value="SynGO"/>
</dbReference>
<dbReference type="GO" id="GO:0098831">
    <property type="term" value="C:presynaptic active zone cytoplasmic component"/>
    <property type="evidence" value="ECO:0000314"/>
    <property type="project" value="SynGO"/>
</dbReference>
<dbReference type="GO" id="GO:0017053">
    <property type="term" value="C:transcription repressor complex"/>
    <property type="evidence" value="ECO:0000250"/>
    <property type="project" value="UniProtKB"/>
</dbReference>
<dbReference type="GO" id="GO:0140297">
    <property type="term" value="F:DNA-binding transcription factor binding"/>
    <property type="evidence" value="ECO:0000318"/>
    <property type="project" value="GO_Central"/>
</dbReference>
<dbReference type="GO" id="GO:0051287">
    <property type="term" value="F:NAD binding"/>
    <property type="evidence" value="ECO:0007669"/>
    <property type="project" value="InterPro"/>
</dbReference>
<dbReference type="GO" id="GO:0016616">
    <property type="term" value="F:oxidoreductase activity, acting on the CH-OH group of donors, NAD or NADP as acceptor"/>
    <property type="evidence" value="ECO:0007669"/>
    <property type="project" value="InterPro"/>
</dbReference>
<dbReference type="GO" id="GO:0003713">
    <property type="term" value="F:transcription coactivator activity"/>
    <property type="evidence" value="ECO:0000318"/>
    <property type="project" value="GO_Central"/>
</dbReference>
<dbReference type="GO" id="GO:0001221">
    <property type="term" value="F:transcription coregulator binding"/>
    <property type="evidence" value="ECO:0000318"/>
    <property type="project" value="GO_Central"/>
</dbReference>
<dbReference type="GO" id="GO:0003714">
    <property type="term" value="F:transcription corepressor activity"/>
    <property type="evidence" value="ECO:0000318"/>
    <property type="project" value="GO_Central"/>
</dbReference>
<dbReference type="GO" id="GO:0045892">
    <property type="term" value="P:negative regulation of DNA-templated transcription"/>
    <property type="evidence" value="ECO:0000250"/>
    <property type="project" value="UniProtKB"/>
</dbReference>
<dbReference type="GO" id="GO:0006357">
    <property type="term" value="P:regulation of transcription by RNA polymerase II"/>
    <property type="evidence" value="ECO:0000318"/>
    <property type="project" value="GO_Central"/>
</dbReference>
<dbReference type="GO" id="GO:0050872">
    <property type="term" value="P:white fat cell differentiation"/>
    <property type="evidence" value="ECO:0000250"/>
    <property type="project" value="UniProtKB"/>
</dbReference>
<dbReference type="CDD" id="cd05299">
    <property type="entry name" value="CtBP_dh"/>
    <property type="match status" value="1"/>
</dbReference>
<dbReference type="FunFam" id="3.40.50.720:FF:001383">
    <property type="entry name" value="C-terminal-binding protein 2"/>
    <property type="match status" value="1"/>
</dbReference>
<dbReference type="Gene3D" id="3.40.50.720">
    <property type="entry name" value="NAD(P)-binding Rossmann-like Domain"/>
    <property type="match status" value="2"/>
</dbReference>
<dbReference type="InterPro" id="IPR043322">
    <property type="entry name" value="CtBP"/>
</dbReference>
<dbReference type="InterPro" id="IPR051638">
    <property type="entry name" value="CTBP_dehydrogenase"/>
</dbReference>
<dbReference type="InterPro" id="IPR006139">
    <property type="entry name" value="D-isomer_2_OHA_DH_cat_dom"/>
</dbReference>
<dbReference type="InterPro" id="IPR029753">
    <property type="entry name" value="D-isomer_DH_CS"/>
</dbReference>
<dbReference type="InterPro" id="IPR006140">
    <property type="entry name" value="D-isomer_DH_NAD-bd"/>
</dbReference>
<dbReference type="InterPro" id="IPR036291">
    <property type="entry name" value="NAD(P)-bd_dom_sf"/>
</dbReference>
<dbReference type="PANTHER" id="PTHR46029">
    <property type="entry name" value="C-TERMINAL-BINDING PROTEIN"/>
    <property type="match status" value="1"/>
</dbReference>
<dbReference type="PANTHER" id="PTHR46029:SF3">
    <property type="entry name" value="C-TERMINAL-BINDING PROTEIN 2"/>
    <property type="match status" value="1"/>
</dbReference>
<dbReference type="Pfam" id="PF00389">
    <property type="entry name" value="2-Hacid_dh"/>
    <property type="match status" value="1"/>
</dbReference>
<dbReference type="Pfam" id="PF02826">
    <property type="entry name" value="2-Hacid_dh_C"/>
    <property type="match status" value="1"/>
</dbReference>
<dbReference type="SUPFAM" id="SSF52283">
    <property type="entry name" value="Formate/glycerate dehydrogenase catalytic domain-like"/>
    <property type="match status" value="1"/>
</dbReference>
<dbReference type="SUPFAM" id="SSF51735">
    <property type="entry name" value="NAD(P)-binding Rossmann-fold domains"/>
    <property type="match status" value="1"/>
</dbReference>
<dbReference type="PROSITE" id="PS00671">
    <property type="entry name" value="D_2_HYDROXYACID_DH_3"/>
    <property type="match status" value="1"/>
</dbReference>
<organism>
    <name type="scientific">Bos taurus</name>
    <name type="common">Bovine</name>
    <dbReference type="NCBI Taxonomy" id="9913"/>
    <lineage>
        <taxon>Eukaryota</taxon>
        <taxon>Metazoa</taxon>
        <taxon>Chordata</taxon>
        <taxon>Craniata</taxon>
        <taxon>Vertebrata</taxon>
        <taxon>Euteleostomi</taxon>
        <taxon>Mammalia</taxon>
        <taxon>Eutheria</taxon>
        <taxon>Laurasiatheria</taxon>
        <taxon>Artiodactyla</taxon>
        <taxon>Ruminantia</taxon>
        <taxon>Pecora</taxon>
        <taxon>Bovidae</taxon>
        <taxon>Bovinae</taxon>
        <taxon>Bos</taxon>
    </lineage>
</organism>
<feature type="chain" id="PRO_0000284890" description="C-terminal-binding protein 2">
    <location>
        <begin position="1"/>
        <end position="445"/>
    </location>
</feature>
<feature type="region of interest" description="Disordered" evidence="3">
    <location>
        <begin position="414"/>
        <end position="445"/>
    </location>
</feature>
<feature type="compositionally biased region" description="Basic and acidic residues" evidence="3">
    <location>
        <begin position="434"/>
        <end position="445"/>
    </location>
</feature>
<feature type="active site" evidence="1">
    <location>
        <position position="272"/>
    </location>
</feature>
<feature type="active site" evidence="1">
    <location>
        <position position="301"/>
    </location>
</feature>
<feature type="active site" description="Proton donor" evidence="1">
    <location>
        <position position="321"/>
    </location>
</feature>
<feature type="binding site" evidence="1">
    <location>
        <position position="106"/>
    </location>
    <ligand>
        <name>NAD(+)</name>
        <dbReference type="ChEBI" id="CHEBI:57540"/>
    </ligand>
</feature>
<feature type="binding site" evidence="1">
    <location>
        <begin position="186"/>
        <end position="191"/>
    </location>
    <ligand>
        <name>NAD(+)</name>
        <dbReference type="ChEBI" id="CHEBI:57540"/>
    </ligand>
</feature>
<feature type="binding site" evidence="1">
    <location>
        <position position="210"/>
    </location>
    <ligand>
        <name>NAD(+)</name>
        <dbReference type="ChEBI" id="CHEBI:57540"/>
    </ligand>
</feature>
<feature type="binding site" evidence="1">
    <location>
        <begin position="243"/>
        <end position="249"/>
    </location>
    <ligand>
        <name>NAD(+)</name>
        <dbReference type="ChEBI" id="CHEBI:57540"/>
    </ligand>
</feature>
<feature type="binding site" evidence="1">
    <location>
        <begin position="270"/>
        <end position="272"/>
    </location>
    <ligand>
        <name>NAD(+)</name>
        <dbReference type="ChEBI" id="CHEBI:57540"/>
    </ligand>
</feature>
<feature type="binding site" evidence="1">
    <location>
        <position position="296"/>
    </location>
    <ligand>
        <name>NAD(+)</name>
        <dbReference type="ChEBI" id="CHEBI:57540"/>
    </ligand>
</feature>
<feature type="binding site" evidence="1">
    <location>
        <begin position="321"/>
        <end position="324"/>
    </location>
    <ligand>
        <name>NAD(+)</name>
        <dbReference type="ChEBI" id="CHEBI:57540"/>
    </ligand>
</feature>
<feature type="modified residue" description="Asymmetric dimethylarginine" evidence="2">
    <location>
        <position position="22"/>
    </location>
</feature>
<feature type="modified residue" description="Phosphoserine" evidence="2">
    <location>
        <position position="428"/>
    </location>
</feature>
<feature type="splice variant" id="VSP_027614" description="In isoform 2." evidence="5">
    <original>MALVDKHKVKRQRLDRICEG</original>
    <variation>MPVPSRHINIGRSQSWDAAGWYEGPWEVAEAPGRRSSLTDGGGEGLWYPGLRDVAMPGAAEPCLYREAFYSTAAGRKSSVPDFAFYDSRQAVMSARGALLPGDYYSDPAGAARAPGEPLHHRHPGAGQPLPGYGAPGGRMTWEPVAARAPALQDTGHLYRDPGGKMIPQGQRSHSRAPSPAQYIGEPADSRYGAEAPAYPTGQVYNNASERPVDSAASRQAAPTCLVVDPGAAAASGIGVGTAPSAPPRGYGPAREGVHPRMAYERCESDPSAFQGPGGSKRSVMPEFLALLRAEGVSEATPVALLQQGFDSPAVLATMEDADIKCVAPNLGQARVLSRLASGCRTEMQLRRQGRGPPLPRTRSSSFSHRSELQGDQVGLGAAALQPQPQPQAGPLQAASPRAVDPAHRRPSSAPSQHLLETAATYSGPRVGAQAAHFPSNSGYSSPTPCALTARPSPAYPLQPGVPLTHPGPRTAYSTAYTVPMELLKRERGAAVSPVPSPHGSPQLLRKPGAPLEPPALPPASQSLHTPHSPYQKVARRTGAPIIVSTMLAPEPS</variation>
    <location>
        <begin position="1"/>
        <end position="20"/>
    </location>
</feature>
<reference key="1">
    <citation type="journal article" date="2000" name="Neuron">
        <title>RIBEYE, a component of synaptic ribbons: a protein's journey through evolution provides insight into synaptic ribbon function.</title>
        <authorList>
            <person name="Schmitz F."/>
            <person name="Koenigstorfer A."/>
            <person name="Suedhof T.C."/>
        </authorList>
    </citation>
    <scope>NUCLEOTIDE SEQUENCE [MRNA] (ISOFORM 2)</scope>
    <scope>PARTIAL PROTEIN SEQUENCE (ISOFORM 2)</scope>
    <scope>TISSUE SPECIFICITY</scope>
</reference>
<reference key="2">
    <citation type="submission" date="2006-08" db="EMBL/GenBank/DDBJ databases">
        <authorList>
            <consortium name="NIH - Mammalian Gene Collection (MGC) project"/>
        </authorList>
    </citation>
    <scope>NUCLEOTIDE SEQUENCE [LARGE SCALE MRNA] (ISOFORM 1)</scope>
    <source>
        <strain>Hereford</strain>
        <tissue>Fetal liver</tissue>
    </source>
</reference>